<organism>
    <name type="scientific">Porphyromonas gingivalis (strain ATCC BAA-308 / W83)</name>
    <dbReference type="NCBI Taxonomy" id="242619"/>
    <lineage>
        <taxon>Bacteria</taxon>
        <taxon>Pseudomonadati</taxon>
        <taxon>Bacteroidota</taxon>
        <taxon>Bacteroidia</taxon>
        <taxon>Bacteroidales</taxon>
        <taxon>Porphyromonadaceae</taxon>
        <taxon>Porphyromonas</taxon>
    </lineage>
</organism>
<keyword id="KW-0963">Cytoplasm</keyword>
<keyword id="KW-0238">DNA-binding</keyword>
<keyword id="KW-0520">NAD</keyword>
<keyword id="KW-1185">Reference proteome</keyword>
<keyword id="KW-0678">Repressor</keyword>
<keyword id="KW-0804">Transcription</keyword>
<keyword id="KW-0805">Transcription regulation</keyword>
<protein>
    <recommendedName>
        <fullName evidence="1">Redox-sensing transcriptional repressor Rex</fullName>
    </recommendedName>
</protein>
<evidence type="ECO:0000255" key="1">
    <source>
        <dbReference type="HAMAP-Rule" id="MF_01131"/>
    </source>
</evidence>
<feature type="chain" id="PRO_0000097901" description="Redox-sensing transcriptional repressor Rex">
    <location>
        <begin position="1"/>
        <end position="218"/>
    </location>
</feature>
<feature type="DNA-binding region" description="H-T-H motif" evidence="1">
    <location>
        <begin position="25"/>
        <end position="64"/>
    </location>
</feature>
<feature type="binding site" evidence="1">
    <location>
        <begin position="99"/>
        <end position="104"/>
    </location>
    <ligand>
        <name>NAD(+)</name>
        <dbReference type="ChEBI" id="CHEBI:57540"/>
    </ligand>
</feature>
<gene>
    <name evidence="1" type="primary">rex</name>
    <name type="ordered locus">PG_0024</name>
</gene>
<sequence>MKTIANESFLLDTKVPEPTLRRLPWYLSYVQLLHADGCESVSSTRIARAVGVDASLVAKDLSYVSVDGRTRVGYRVADMVAVLNDFLGFTHHHRAFLFGVGSLGAALLQDSGLRHFGLEIAAGFDVNPDIVDTNINGIPVYHKSRVAELCARERVDIGILTVPIRAAQSMADEMIAAGIKAIWNFTPWRISVPEGVVVQNTSMYAQLAVMFNRMKSLP</sequence>
<comment type="function">
    <text evidence="1">Modulates transcription in response to changes in cellular NADH/NAD(+) redox state.</text>
</comment>
<comment type="subunit">
    <text evidence="1">Homodimer.</text>
</comment>
<comment type="subcellular location">
    <subcellularLocation>
        <location evidence="1">Cytoplasm</location>
    </subcellularLocation>
</comment>
<comment type="similarity">
    <text evidence="1">Belongs to the transcriptional regulatory Rex family.</text>
</comment>
<name>REX_PORGI</name>
<dbReference type="EMBL" id="AE015924">
    <property type="protein sequence ID" value="AAQ65279.1"/>
    <property type="molecule type" value="Genomic_DNA"/>
</dbReference>
<dbReference type="RefSeq" id="WP_010955897.1">
    <property type="nucleotide sequence ID" value="NC_002950.2"/>
</dbReference>
<dbReference type="SMR" id="Q7MXX4"/>
<dbReference type="STRING" id="242619.PG_0024"/>
<dbReference type="EnsemblBacteria" id="AAQ65279">
    <property type="protein sequence ID" value="AAQ65279"/>
    <property type="gene ID" value="PG_0024"/>
</dbReference>
<dbReference type="KEGG" id="pgi:PG_0024"/>
<dbReference type="eggNOG" id="COG2344">
    <property type="taxonomic scope" value="Bacteria"/>
</dbReference>
<dbReference type="HOGENOM" id="CLU_061534_1_1_10"/>
<dbReference type="Proteomes" id="UP000000588">
    <property type="component" value="Chromosome"/>
</dbReference>
<dbReference type="GO" id="GO:0005737">
    <property type="term" value="C:cytoplasm"/>
    <property type="evidence" value="ECO:0007669"/>
    <property type="project" value="UniProtKB-SubCell"/>
</dbReference>
<dbReference type="GO" id="GO:0003677">
    <property type="term" value="F:DNA binding"/>
    <property type="evidence" value="ECO:0007669"/>
    <property type="project" value="UniProtKB-UniRule"/>
</dbReference>
<dbReference type="GO" id="GO:0003700">
    <property type="term" value="F:DNA-binding transcription factor activity"/>
    <property type="evidence" value="ECO:0007669"/>
    <property type="project" value="UniProtKB-UniRule"/>
</dbReference>
<dbReference type="GO" id="GO:0045892">
    <property type="term" value="P:negative regulation of DNA-templated transcription"/>
    <property type="evidence" value="ECO:0007669"/>
    <property type="project" value="InterPro"/>
</dbReference>
<dbReference type="GO" id="GO:0051775">
    <property type="term" value="P:response to redox state"/>
    <property type="evidence" value="ECO:0007669"/>
    <property type="project" value="InterPro"/>
</dbReference>
<dbReference type="Gene3D" id="3.40.50.720">
    <property type="entry name" value="NAD(P)-binding Rossmann-like Domain"/>
    <property type="match status" value="1"/>
</dbReference>
<dbReference type="Gene3D" id="1.10.10.10">
    <property type="entry name" value="Winged helix-like DNA-binding domain superfamily/Winged helix DNA-binding domain"/>
    <property type="match status" value="1"/>
</dbReference>
<dbReference type="HAMAP" id="MF_01131">
    <property type="entry name" value="Rex"/>
    <property type="match status" value="1"/>
</dbReference>
<dbReference type="InterPro" id="IPR003781">
    <property type="entry name" value="CoA-bd"/>
</dbReference>
<dbReference type="InterPro" id="IPR036291">
    <property type="entry name" value="NAD(P)-bd_dom_sf"/>
</dbReference>
<dbReference type="InterPro" id="IPR009718">
    <property type="entry name" value="Rex_DNA-bd_C_dom"/>
</dbReference>
<dbReference type="InterPro" id="IPR022876">
    <property type="entry name" value="Tscrpt_rep_Rex"/>
</dbReference>
<dbReference type="InterPro" id="IPR036388">
    <property type="entry name" value="WH-like_DNA-bd_sf"/>
</dbReference>
<dbReference type="InterPro" id="IPR036390">
    <property type="entry name" value="WH_DNA-bd_sf"/>
</dbReference>
<dbReference type="NCBIfam" id="NF003994">
    <property type="entry name" value="PRK05472.2-3"/>
    <property type="match status" value="1"/>
</dbReference>
<dbReference type="NCBIfam" id="NF003995">
    <property type="entry name" value="PRK05472.2-4"/>
    <property type="match status" value="1"/>
</dbReference>
<dbReference type="NCBIfam" id="NF003996">
    <property type="entry name" value="PRK05472.2-5"/>
    <property type="match status" value="1"/>
</dbReference>
<dbReference type="PANTHER" id="PTHR35786">
    <property type="entry name" value="REDOX-SENSING TRANSCRIPTIONAL REPRESSOR REX"/>
    <property type="match status" value="1"/>
</dbReference>
<dbReference type="PANTHER" id="PTHR35786:SF1">
    <property type="entry name" value="REDOX-SENSING TRANSCRIPTIONAL REPRESSOR REX 1"/>
    <property type="match status" value="1"/>
</dbReference>
<dbReference type="Pfam" id="PF02629">
    <property type="entry name" value="CoA_binding"/>
    <property type="match status" value="1"/>
</dbReference>
<dbReference type="Pfam" id="PF06971">
    <property type="entry name" value="Put_DNA-bind_N"/>
    <property type="match status" value="1"/>
</dbReference>
<dbReference type="SMART" id="SM00881">
    <property type="entry name" value="CoA_binding"/>
    <property type="match status" value="1"/>
</dbReference>
<dbReference type="SUPFAM" id="SSF51735">
    <property type="entry name" value="NAD(P)-binding Rossmann-fold domains"/>
    <property type="match status" value="1"/>
</dbReference>
<dbReference type="SUPFAM" id="SSF46785">
    <property type="entry name" value="Winged helix' DNA-binding domain"/>
    <property type="match status" value="1"/>
</dbReference>
<reference key="1">
    <citation type="journal article" date="2003" name="J. Bacteriol.">
        <title>Complete genome sequence of the oral pathogenic bacterium Porphyromonas gingivalis strain W83.</title>
        <authorList>
            <person name="Nelson K.E."/>
            <person name="Fleischmann R.D."/>
            <person name="DeBoy R.T."/>
            <person name="Paulsen I.T."/>
            <person name="Fouts D.E."/>
            <person name="Eisen J.A."/>
            <person name="Daugherty S.C."/>
            <person name="Dodson R.J."/>
            <person name="Durkin A.S."/>
            <person name="Gwinn M.L."/>
            <person name="Haft D.H."/>
            <person name="Kolonay J.F."/>
            <person name="Nelson W.C."/>
            <person name="Mason T.M."/>
            <person name="Tallon L."/>
            <person name="Gray J."/>
            <person name="Granger D."/>
            <person name="Tettelin H."/>
            <person name="Dong H."/>
            <person name="Galvin J.L."/>
            <person name="Duncan M.J."/>
            <person name="Dewhirst F.E."/>
            <person name="Fraser C.M."/>
        </authorList>
    </citation>
    <scope>NUCLEOTIDE SEQUENCE [LARGE SCALE GENOMIC DNA]</scope>
    <source>
        <strain>ATCC BAA-308 / W83</strain>
    </source>
</reference>
<accession>Q7MXX4</accession>
<proteinExistence type="inferred from homology"/>